<dbReference type="EC" id="2.7.4.25" evidence="1"/>
<dbReference type="EMBL" id="AE014299">
    <property type="protein sequence ID" value="AAN55437.1"/>
    <property type="molecule type" value="Genomic_DNA"/>
</dbReference>
<dbReference type="RefSeq" id="NP_717993.1">
    <property type="nucleotide sequence ID" value="NC_004347.2"/>
</dbReference>
<dbReference type="RefSeq" id="WP_011072382.1">
    <property type="nucleotide sequence ID" value="NZ_CP053946.1"/>
</dbReference>
<dbReference type="SMR" id="Q8EEH9"/>
<dbReference type="STRING" id="211586.SO_2403"/>
<dbReference type="PaxDb" id="211586-SO_2403"/>
<dbReference type="KEGG" id="son:SO_2403"/>
<dbReference type="PATRIC" id="fig|211586.12.peg.2312"/>
<dbReference type="eggNOG" id="COG0283">
    <property type="taxonomic scope" value="Bacteria"/>
</dbReference>
<dbReference type="HOGENOM" id="CLU_079959_2_0_6"/>
<dbReference type="OrthoDB" id="9807434at2"/>
<dbReference type="PhylomeDB" id="Q8EEH9"/>
<dbReference type="BioCyc" id="SONE211586:G1GMP-2197-MONOMER"/>
<dbReference type="Proteomes" id="UP000008186">
    <property type="component" value="Chromosome"/>
</dbReference>
<dbReference type="GO" id="GO:0005829">
    <property type="term" value="C:cytosol"/>
    <property type="evidence" value="ECO:0000318"/>
    <property type="project" value="GO_Central"/>
</dbReference>
<dbReference type="GO" id="GO:0004127">
    <property type="term" value="F:(d)CMP kinase activity"/>
    <property type="evidence" value="ECO:0000318"/>
    <property type="project" value="GO_Central"/>
</dbReference>
<dbReference type="GO" id="GO:0005524">
    <property type="term" value="F:ATP binding"/>
    <property type="evidence" value="ECO:0007669"/>
    <property type="project" value="UniProtKB-UniRule"/>
</dbReference>
<dbReference type="GO" id="GO:0036430">
    <property type="term" value="F:CMP kinase activity"/>
    <property type="evidence" value="ECO:0007669"/>
    <property type="project" value="RHEA"/>
</dbReference>
<dbReference type="GO" id="GO:0036431">
    <property type="term" value="F:dCMP kinase activity"/>
    <property type="evidence" value="ECO:0007669"/>
    <property type="project" value="RHEA"/>
</dbReference>
<dbReference type="GO" id="GO:0015949">
    <property type="term" value="P:nucleobase-containing small molecule interconversion"/>
    <property type="evidence" value="ECO:0000318"/>
    <property type="project" value="GO_Central"/>
</dbReference>
<dbReference type="GO" id="GO:0006220">
    <property type="term" value="P:pyrimidine nucleotide metabolic process"/>
    <property type="evidence" value="ECO:0007669"/>
    <property type="project" value="UniProtKB-UniRule"/>
</dbReference>
<dbReference type="CDD" id="cd02020">
    <property type="entry name" value="CMPK"/>
    <property type="match status" value="1"/>
</dbReference>
<dbReference type="FunFam" id="3.40.50.300:FF:000262">
    <property type="entry name" value="Cytidylate kinase"/>
    <property type="match status" value="1"/>
</dbReference>
<dbReference type="Gene3D" id="3.40.50.300">
    <property type="entry name" value="P-loop containing nucleotide triphosphate hydrolases"/>
    <property type="match status" value="1"/>
</dbReference>
<dbReference type="HAMAP" id="MF_00238">
    <property type="entry name" value="Cytidyl_kinase_type1"/>
    <property type="match status" value="1"/>
</dbReference>
<dbReference type="InterPro" id="IPR003136">
    <property type="entry name" value="Cytidylate_kin"/>
</dbReference>
<dbReference type="InterPro" id="IPR011994">
    <property type="entry name" value="Cytidylate_kinase_dom"/>
</dbReference>
<dbReference type="InterPro" id="IPR027417">
    <property type="entry name" value="P-loop_NTPase"/>
</dbReference>
<dbReference type="NCBIfam" id="TIGR00017">
    <property type="entry name" value="cmk"/>
    <property type="match status" value="1"/>
</dbReference>
<dbReference type="PANTHER" id="PTHR21299:SF2">
    <property type="entry name" value="CYTIDYLATE KINASE"/>
    <property type="match status" value="1"/>
</dbReference>
<dbReference type="PANTHER" id="PTHR21299">
    <property type="entry name" value="CYTIDYLATE KINASE/PANTOATE-BETA-ALANINE LIGASE"/>
    <property type="match status" value="1"/>
</dbReference>
<dbReference type="Pfam" id="PF02224">
    <property type="entry name" value="Cytidylate_kin"/>
    <property type="match status" value="1"/>
</dbReference>
<dbReference type="SUPFAM" id="SSF52540">
    <property type="entry name" value="P-loop containing nucleoside triphosphate hydrolases"/>
    <property type="match status" value="1"/>
</dbReference>
<comment type="catalytic activity">
    <reaction evidence="1">
        <text>CMP + ATP = CDP + ADP</text>
        <dbReference type="Rhea" id="RHEA:11600"/>
        <dbReference type="ChEBI" id="CHEBI:30616"/>
        <dbReference type="ChEBI" id="CHEBI:58069"/>
        <dbReference type="ChEBI" id="CHEBI:60377"/>
        <dbReference type="ChEBI" id="CHEBI:456216"/>
        <dbReference type="EC" id="2.7.4.25"/>
    </reaction>
</comment>
<comment type="catalytic activity">
    <reaction evidence="1">
        <text>dCMP + ATP = dCDP + ADP</text>
        <dbReference type="Rhea" id="RHEA:25094"/>
        <dbReference type="ChEBI" id="CHEBI:30616"/>
        <dbReference type="ChEBI" id="CHEBI:57566"/>
        <dbReference type="ChEBI" id="CHEBI:58593"/>
        <dbReference type="ChEBI" id="CHEBI:456216"/>
        <dbReference type="EC" id="2.7.4.25"/>
    </reaction>
</comment>
<comment type="subcellular location">
    <subcellularLocation>
        <location evidence="1">Cytoplasm</location>
    </subcellularLocation>
</comment>
<comment type="similarity">
    <text evidence="1">Belongs to the cytidylate kinase family. Type 1 subfamily.</text>
</comment>
<feature type="chain" id="PRO_0000131970" description="Cytidylate kinase">
    <location>
        <begin position="1"/>
        <end position="230"/>
    </location>
</feature>
<feature type="binding site" evidence="1">
    <location>
        <begin position="12"/>
        <end position="20"/>
    </location>
    <ligand>
        <name>ATP</name>
        <dbReference type="ChEBI" id="CHEBI:30616"/>
    </ligand>
</feature>
<evidence type="ECO:0000255" key="1">
    <source>
        <dbReference type="HAMAP-Rule" id="MF_00238"/>
    </source>
</evidence>
<name>KCY_SHEON</name>
<protein>
    <recommendedName>
        <fullName evidence="1">Cytidylate kinase</fullName>
        <shortName evidence="1">CK</shortName>
        <ecNumber evidence="1">2.7.4.25</ecNumber>
    </recommendedName>
    <alternativeName>
        <fullName evidence="1">Cytidine monophosphate kinase</fullName>
        <shortName evidence="1">CMP kinase</shortName>
    </alternativeName>
</protein>
<proteinExistence type="inferred from homology"/>
<keyword id="KW-0067">ATP-binding</keyword>
<keyword id="KW-0963">Cytoplasm</keyword>
<keyword id="KW-0418">Kinase</keyword>
<keyword id="KW-0547">Nucleotide-binding</keyword>
<keyword id="KW-1185">Reference proteome</keyword>
<keyword id="KW-0808">Transferase</keyword>
<accession>Q8EEH9</accession>
<gene>
    <name evidence="1" type="primary">cmk</name>
    <name type="ordered locus">SO_2403</name>
</gene>
<organism>
    <name type="scientific">Shewanella oneidensis (strain ATCC 700550 / JCM 31522 / CIP 106686 / LMG 19005 / NCIMB 14063 / MR-1)</name>
    <dbReference type="NCBI Taxonomy" id="211586"/>
    <lineage>
        <taxon>Bacteria</taxon>
        <taxon>Pseudomonadati</taxon>
        <taxon>Pseudomonadota</taxon>
        <taxon>Gammaproteobacteria</taxon>
        <taxon>Alteromonadales</taxon>
        <taxon>Shewanellaceae</taxon>
        <taxon>Shewanella</taxon>
    </lineage>
</organism>
<reference key="1">
    <citation type="journal article" date="2002" name="Nat. Biotechnol.">
        <title>Genome sequence of the dissimilatory metal ion-reducing bacterium Shewanella oneidensis.</title>
        <authorList>
            <person name="Heidelberg J.F."/>
            <person name="Paulsen I.T."/>
            <person name="Nelson K.E."/>
            <person name="Gaidos E.J."/>
            <person name="Nelson W.C."/>
            <person name="Read T.D."/>
            <person name="Eisen J.A."/>
            <person name="Seshadri R."/>
            <person name="Ward N.L."/>
            <person name="Methe B.A."/>
            <person name="Clayton R.A."/>
            <person name="Meyer T."/>
            <person name="Tsapin A."/>
            <person name="Scott J."/>
            <person name="Beanan M.J."/>
            <person name="Brinkac L.M."/>
            <person name="Daugherty S.C."/>
            <person name="DeBoy R.T."/>
            <person name="Dodson R.J."/>
            <person name="Durkin A.S."/>
            <person name="Haft D.H."/>
            <person name="Kolonay J.F."/>
            <person name="Madupu R."/>
            <person name="Peterson J.D."/>
            <person name="Umayam L.A."/>
            <person name="White O."/>
            <person name="Wolf A.M."/>
            <person name="Vamathevan J.J."/>
            <person name="Weidman J.F."/>
            <person name="Impraim M."/>
            <person name="Lee K."/>
            <person name="Berry K.J."/>
            <person name="Lee C."/>
            <person name="Mueller J."/>
            <person name="Khouri H.M."/>
            <person name="Gill J."/>
            <person name="Utterback T.R."/>
            <person name="McDonald L.A."/>
            <person name="Feldblyum T.V."/>
            <person name="Smith H.O."/>
            <person name="Venter J.C."/>
            <person name="Nealson K.H."/>
            <person name="Fraser C.M."/>
        </authorList>
    </citation>
    <scope>NUCLEOTIDE SEQUENCE [LARGE SCALE GENOMIC DNA]</scope>
    <source>
        <strain>ATCC 700550 / JCM 31522 / CIP 106686 / LMG 19005 / NCIMB 14063 / MR-1</strain>
    </source>
</reference>
<sequence>MSERAPVVTIDGPSGAGKGTISQLLAKHLGWQLLDSGAIYRVLALAAIHHDVELENEESITLLASHLDVKFLTGNEKDPVQVILEGEDVTTAIRTQECSNAASKVAAFPRVREALLRRQRAFRTAPGLIADGRDMGTVVFPTASAKLYLTASAQERAQRRYNQLQDKGFDVNIERLLAEIIERDDRDMNRPVAPLVPAENALVIDTSDKGIDEVLELALNYINQKLSSTN</sequence>